<feature type="chain" id="PRO_0000162722" description="tRNA pseudouridine synthase C">
    <location>
        <begin position="1"/>
        <end position="245"/>
    </location>
</feature>
<feature type="active site" evidence="1">
    <location>
        <position position="54"/>
    </location>
</feature>
<dbReference type="EC" id="5.4.99.26"/>
<dbReference type="EMBL" id="AE016795">
    <property type="protein sequence ID" value="AAO10258.1"/>
    <property type="molecule type" value="Genomic_DNA"/>
</dbReference>
<dbReference type="RefSeq" id="WP_011079758.1">
    <property type="nucleotide sequence ID" value="NC_004459.3"/>
</dbReference>
<dbReference type="SMR" id="Q8DBG5"/>
<dbReference type="KEGG" id="vvu:VV1_1855"/>
<dbReference type="HOGENOM" id="CLU_016902_11_4_6"/>
<dbReference type="Proteomes" id="UP000002275">
    <property type="component" value="Chromosome 1"/>
</dbReference>
<dbReference type="GO" id="GO:0003723">
    <property type="term" value="F:RNA binding"/>
    <property type="evidence" value="ECO:0007669"/>
    <property type="project" value="InterPro"/>
</dbReference>
<dbReference type="GO" id="GO:0160149">
    <property type="term" value="F:tRNA pseudouridine(65) synthase activity"/>
    <property type="evidence" value="ECO:0007669"/>
    <property type="project" value="UniProtKB-EC"/>
</dbReference>
<dbReference type="GO" id="GO:0000455">
    <property type="term" value="P:enzyme-directed rRNA pseudouridine synthesis"/>
    <property type="evidence" value="ECO:0007669"/>
    <property type="project" value="TreeGrafter"/>
</dbReference>
<dbReference type="GO" id="GO:0008033">
    <property type="term" value="P:tRNA processing"/>
    <property type="evidence" value="ECO:0007669"/>
    <property type="project" value="UniProtKB-KW"/>
</dbReference>
<dbReference type="CDD" id="cd02563">
    <property type="entry name" value="PseudoU_synth_TruC"/>
    <property type="match status" value="1"/>
</dbReference>
<dbReference type="Gene3D" id="3.30.2350.10">
    <property type="entry name" value="Pseudouridine synthase"/>
    <property type="match status" value="1"/>
</dbReference>
<dbReference type="InterPro" id="IPR020103">
    <property type="entry name" value="PsdUridine_synth_cat_dom_sf"/>
</dbReference>
<dbReference type="InterPro" id="IPR006224">
    <property type="entry name" value="PsdUridine_synth_RluA-like_CS"/>
</dbReference>
<dbReference type="InterPro" id="IPR006145">
    <property type="entry name" value="PsdUridine_synth_RsuA/RluA"/>
</dbReference>
<dbReference type="InterPro" id="IPR050188">
    <property type="entry name" value="RluA_PseudoU_synthase"/>
</dbReference>
<dbReference type="NCBIfam" id="NF008321">
    <property type="entry name" value="PRK11112.1"/>
    <property type="match status" value="1"/>
</dbReference>
<dbReference type="PANTHER" id="PTHR21600">
    <property type="entry name" value="MITOCHONDRIAL RNA PSEUDOURIDINE SYNTHASE"/>
    <property type="match status" value="1"/>
</dbReference>
<dbReference type="PANTHER" id="PTHR21600:SF56">
    <property type="entry name" value="TRNA PSEUDOURIDINE SYNTHASE C"/>
    <property type="match status" value="1"/>
</dbReference>
<dbReference type="Pfam" id="PF00849">
    <property type="entry name" value="PseudoU_synth_2"/>
    <property type="match status" value="1"/>
</dbReference>
<dbReference type="SUPFAM" id="SSF55120">
    <property type="entry name" value="Pseudouridine synthase"/>
    <property type="match status" value="1"/>
</dbReference>
<dbReference type="PROSITE" id="PS01129">
    <property type="entry name" value="PSI_RLU"/>
    <property type="match status" value="1"/>
</dbReference>
<evidence type="ECO:0000250" key="1"/>
<evidence type="ECO:0000305" key="2"/>
<accession>Q8DBG5</accession>
<sequence length="245" mass="28491">MLEIVYQDEYFVAVNKPAGMLVHRSWLDKHETQFVMQTLRDQIGQHVFPLHRLDRPTSGVLVFALSSEVASQVMPMFAGQEMSKTYHAIVRGWIEEEGELDYALKVELDKIADKFASQEKEAQDAITLYKPLAKVEVPYSTSKFPTTRYGLMELKPKTGRKHQLRRHMAHLRHPIVGDTTHGDGKHNKLFREEFDAPRLLLHASELRFVHPYTQQEVVIRAEVDKVWQQLFERFEWPSTLLTASH</sequence>
<name>TRUC_VIBVU</name>
<proteinExistence type="inferred from homology"/>
<gene>
    <name type="primary">truC</name>
    <name type="ordered locus">VV1_1855</name>
</gene>
<keyword id="KW-0413">Isomerase</keyword>
<keyword id="KW-0819">tRNA processing</keyword>
<protein>
    <recommendedName>
        <fullName>tRNA pseudouridine synthase C</fullName>
        <ecNumber>5.4.99.26</ecNumber>
    </recommendedName>
    <alternativeName>
        <fullName>tRNA pseudouridine(65) synthase</fullName>
    </alternativeName>
    <alternativeName>
        <fullName>tRNA pseudouridylate synthase C</fullName>
    </alternativeName>
    <alternativeName>
        <fullName>tRNA-uridine isomerase C</fullName>
    </alternativeName>
</protein>
<organism>
    <name type="scientific">Vibrio vulnificus (strain CMCP6)</name>
    <dbReference type="NCBI Taxonomy" id="216895"/>
    <lineage>
        <taxon>Bacteria</taxon>
        <taxon>Pseudomonadati</taxon>
        <taxon>Pseudomonadota</taxon>
        <taxon>Gammaproteobacteria</taxon>
        <taxon>Vibrionales</taxon>
        <taxon>Vibrionaceae</taxon>
        <taxon>Vibrio</taxon>
    </lineage>
</organism>
<reference key="1">
    <citation type="submission" date="2002-12" db="EMBL/GenBank/DDBJ databases">
        <title>Complete genome sequence of Vibrio vulnificus CMCP6.</title>
        <authorList>
            <person name="Rhee J.H."/>
            <person name="Kim S.Y."/>
            <person name="Chung S.S."/>
            <person name="Kim J.J."/>
            <person name="Moon Y.H."/>
            <person name="Jeong H."/>
            <person name="Choy H.E."/>
        </authorList>
    </citation>
    <scope>NUCLEOTIDE SEQUENCE [LARGE SCALE GENOMIC DNA]</scope>
    <source>
        <strain>CMCP6</strain>
    </source>
</reference>
<comment type="function">
    <text evidence="1">Responsible for synthesis of pseudouridine from uracil-65 in transfer RNAs.</text>
</comment>
<comment type="catalytic activity">
    <reaction>
        <text>uridine(65) in tRNA = pseudouridine(65) in tRNA</text>
        <dbReference type="Rhea" id="RHEA:42536"/>
        <dbReference type="Rhea" id="RHEA-COMP:10103"/>
        <dbReference type="Rhea" id="RHEA-COMP:10104"/>
        <dbReference type="ChEBI" id="CHEBI:65314"/>
        <dbReference type="ChEBI" id="CHEBI:65315"/>
        <dbReference type="EC" id="5.4.99.26"/>
    </reaction>
</comment>
<comment type="similarity">
    <text evidence="2">Belongs to the pseudouridine synthase RluA family.</text>
</comment>